<gene>
    <name evidence="9" type="primary">CFBP1</name>
    <name evidence="7" type="synonym">FBP</name>
    <name evidence="8" type="synonym">HCEF1</name>
    <name type="ordered locus">At3g54050</name>
    <name type="ORF">F24B22.10</name>
</gene>
<reference key="1">
    <citation type="journal article" date="1991" name="Plant Mol. Biol.">
        <title>Nucleotide sequence of a cDNA clone encoding chloroplast fructose-1,6-bisphosphatase from Arabidopsis thaliana.</title>
        <authorList>
            <person name="Horsnell P.R."/>
            <person name="Raines C.A."/>
        </authorList>
    </citation>
    <scope>NUCLEOTIDE SEQUENCE [MRNA]</scope>
</reference>
<reference key="2">
    <citation type="journal article" date="2000" name="Nature">
        <title>Sequence and analysis of chromosome 3 of the plant Arabidopsis thaliana.</title>
        <authorList>
            <person name="Salanoubat M."/>
            <person name="Lemcke K."/>
            <person name="Rieger M."/>
            <person name="Ansorge W."/>
            <person name="Unseld M."/>
            <person name="Fartmann B."/>
            <person name="Valle G."/>
            <person name="Bloecker H."/>
            <person name="Perez-Alonso M."/>
            <person name="Obermaier B."/>
            <person name="Delseny M."/>
            <person name="Boutry M."/>
            <person name="Grivell L.A."/>
            <person name="Mache R."/>
            <person name="Puigdomenech P."/>
            <person name="De Simone V."/>
            <person name="Choisne N."/>
            <person name="Artiguenave F."/>
            <person name="Robert C."/>
            <person name="Brottier P."/>
            <person name="Wincker P."/>
            <person name="Cattolico L."/>
            <person name="Weissenbach J."/>
            <person name="Saurin W."/>
            <person name="Quetier F."/>
            <person name="Schaefer M."/>
            <person name="Mueller-Auer S."/>
            <person name="Gabel C."/>
            <person name="Fuchs M."/>
            <person name="Benes V."/>
            <person name="Wurmbach E."/>
            <person name="Drzonek H."/>
            <person name="Erfle H."/>
            <person name="Jordan N."/>
            <person name="Bangert S."/>
            <person name="Wiedelmann R."/>
            <person name="Kranz H."/>
            <person name="Voss H."/>
            <person name="Holland R."/>
            <person name="Brandt P."/>
            <person name="Nyakatura G."/>
            <person name="Vezzi A."/>
            <person name="D'Angelo M."/>
            <person name="Pallavicini A."/>
            <person name="Toppo S."/>
            <person name="Simionati B."/>
            <person name="Conrad A."/>
            <person name="Hornischer K."/>
            <person name="Kauer G."/>
            <person name="Loehnert T.-H."/>
            <person name="Nordsiek G."/>
            <person name="Reichelt J."/>
            <person name="Scharfe M."/>
            <person name="Schoen O."/>
            <person name="Bargues M."/>
            <person name="Terol J."/>
            <person name="Climent J."/>
            <person name="Navarro P."/>
            <person name="Collado C."/>
            <person name="Perez-Perez A."/>
            <person name="Ottenwaelder B."/>
            <person name="Duchemin D."/>
            <person name="Cooke R."/>
            <person name="Laudie M."/>
            <person name="Berger-Llauro C."/>
            <person name="Purnelle B."/>
            <person name="Masuy D."/>
            <person name="de Haan M."/>
            <person name="Maarse A.C."/>
            <person name="Alcaraz J.-P."/>
            <person name="Cottet A."/>
            <person name="Casacuberta E."/>
            <person name="Monfort A."/>
            <person name="Argiriou A."/>
            <person name="Flores M."/>
            <person name="Liguori R."/>
            <person name="Vitale D."/>
            <person name="Mannhaupt G."/>
            <person name="Haase D."/>
            <person name="Schoof H."/>
            <person name="Rudd S."/>
            <person name="Zaccaria P."/>
            <person name="Mewes H.-W."/>
            <person name="Mayer K.F.X."/>
            <person name="Kaul S."/>
            <person name="Town C.D."/>
            <person name="Koo H.L."/>
            <person name="Tallon L.J."/>
            <person name="Jenkins J."/>
            <person name="Rooney T."/>
            <person name="Rizzo M."/>
            <person name="Walts A."/>
            <person name="Utterback T."/>
            <person name="Fujii C.Y."/>
            <person name="Shea T.P."/>
            <person name="Creasy T.H."/>
            <person name="Haas B."/>
            <person name="Maiti R."/>
            <person name="Wu D."/>
            <person name="Peterson J."/>
            <person name="Van Aken S."/>
            <person name="Pai G."/>
            <person name="Militscher J."/>
            <person name="Sellers P."/>
            <person name="Gill J.E."/>
            <person name="Feldblyum T.V."/>
            <person name="Preuss D."/>
            <person name="Lin X."/>
            <person name="Nierman W.C."/>
            <person name="Salzberg S.L."/>
            <person name="White O."/>
            <person name="Venter J.C."/>
            <person name="Fraser C.M."/>
            <person name="Kaneko T."/>
            <person name="Nakamura Y."/>
            <person name="Sato S."/>
            <person name="Kato T."/>
            <person name="Asamizu E."/>
            <person name="Sasamoto S."/>
            <person name="Kimura T."/>
            <person name="Idesawa K."/>
            <person name="Kawashima K."/>
            <person name="Kishida Y."/>
            <person name="Kiyokawa C."/>
            <person name="Kohara M."/>
            <person name="Matsumoto M."/>
            <person name="Matsuno A."/>
            <person name="Muraki A."/>
            <person name="Nakayama S."/>
            <person name="Nakazaki N."/>
            <person name="Shinpo S."/>
            <person name="Takeuchi C."/>
            <person name="Wada T."/>
            <person name="Watanabe A."/>
            <person name="Yamada M."/>
            <person name="Yasuda M."/>
            <person name="Tabata S."/>
        </authorList>
    </citation>
    <scope>NUCLEOTIDE SEQUENCE [LARGE SCALE GENOMIC DNA]</scope>
    <source>
        <strain>cv. Columbia</strain>
    </source>
</reference>
<reference key="3">
    <citation type="journal article" date="2017" name="Plant J.">
        <title>Araport11: a complete reannotation of the Arabidopsis thaliana reference genome.</title>
        <authorList>
            <person name="Cheng C.Y."/>
            <person name="Krishnakumar V."/>
            <person name="Chan A.P."/>
            <person name="Thibaud-Nissen F."/>
            <person name="Schobel S."/>
            <person name="Town C.D."/>
        </authorList>
    </citation>
    <scope>GENOME REANNOTATION</scope>
    <source>
        <strain>cv. Columbia</strain>
    </source>
</reference>
<reference key="4">
    <citation type="journal article" date="2003" name="Science">
        <title>Empirical analysis of transcriptional activity in the Arabidopsis genome.</title>
        <authorList>
            <person name="Yamada K."/>
            <person name="Lim J."/>
            <person name="Dale J.M."/>
            <person name="Chen H."/>
            <person name="Shinn P."/>
            <person name="Palm C.J."/>
            <person name="Southwick A.M."/>
            <person name="Wu H.C."/>
            <person name="Kim C.J."/>
            <person name="Nguyen M."/>
            <person name="Pham P.K."/>
            <person name="Cheuk R.F."/>
            <person name="Karlin-Newmann G."/>
            <person name="Liu S.X."/>
            <person name="Lam B."/>
            <person name="Sakano H."/>
            <person name="Wu T."/>
            <person name="Yu G."/>
            <person name="Miranda M."/>
            <person name="Quach H.L."/>
            <person name="Tripp M."/>
            <person name="Chang C.H."/>
            <person name="Lee J.M."/>
            <person name="Toriumi M.J."/>
            <person name="Chan M.M."/>
            <person name="Tang C.C."/>
            <person name="Onodera C.S."/>
            <person name="Deng J.M."/>
            <person name="Akiyama K."/>
            <person name="Ansari Y."/>
            <person name="Arakawa T."/>
            <person name="Banh J."/>
            <person name="Banno F."/>
            <person name="Bowser L."/>
            <person name="Brooks S.Y."/>
            <person name="Carninci P."/>
            <person name="Chao Q."/>
            <person name="Choy N."/>
            <person name="Enju A."/>
            <person name="Goldsmith A.D."/>
            <person name="Gurjal M."/>
            <person name="Hansen N.F."/>
            <person name="Hayashizaki Y."/>
            <person name="Johnson-Hopson C."/>
            <person name="Hsuan V.W."/>
            <person name="Iida K."/>
            <person name="Karnes M."/>
            <person name="Khan S."/>
            <person name="Koesema E."/>
            <person name="Ishida J."/>
            <person name="Jiang P.X."/>
            <person name="Jones T."/>
            <person name="Kawai J."/>
            <person name="Kamiya A."/>
            <person name="Meyers C."/>
            <person name="Nakajima M."/>
            <person name="Narusaka M."/>
            <person name="Seki M."/>
            <person name="Sakurai T."/>
            <person name="Satou M."/>
            <person name="Tamse R."/>
            <person name="Vaysberg M."/>
            <person name="Wallender E.K."/>
            <person name="Wong C."/>
            <person name="Yamamura Y."/>
            <person name="Yuan S."/>
            <person name="Shinozaki K."/>
            <person name="Davis R.W."/>
            <person name="Theologis A."/>
            <person name="Ecker J.R."/>
        </authorList>
    </citation>
    <scope>NUCLEOTIDE SEQUENCE [LARGE SCALE MRNA]</scope>
    <source>
        <strain>cv. Columbia</strain>
    </source>
</reference>
<reference key="5">
    <citation type="journal article" date="2004" name="J. Exp. Bot.">
        <title>Increased sucrose level and altered nitrogen metabolism in Arabidopsis thaliana transgenic plants expressing antisense chloroplastic fructose-1,6-bisphosphatase.</title>
        <authorList>
            <person name="Sahrawy M."/>
            <person name="Avila C."/>
            <person name="Chueca A."/>
            <person name="Canovas F.M."/>
            <person name="Lopez-Gorge J."/>
        </authorList>
    </citation>
    <scope>FUNCTION</scope>
</reference>
<reference key="6">
    <citation type="journal article" date="2010" name="Plant Cell">
        <title>An Arabidopsis mutant with high cyclic electron flow around photosystem I (hcef) involving the NADPH dehydrogenase complex.</title>
        <authorList>
            <person name="Livingston A.K."/>
            <person name="Cruz J.A."/>
            <person name="Kohzuma K."/>
            <person name="Dhingra A."/>
            <person name="Kramer D.M."/>
        </authorList>
    </citation>
    <scope>FUNCTION</scope>
    <scope>MUTAGENESIS OF ARG-361</scope>
</reference>
<reference key="7">
    <citation type="journal article" date="2012" name="Mol. Cell. Proteomics">
        <title>Comparative large-scale characterisation of plant vs. mammal proteins reveals similar and idiosyncratic N-alpha acetylation features.</title>
        <authorList>
            <person name="Bienvenut W.V."/>
            <person name="Sumpton D."/>
            <person name="Martinez A."/>
            <person name="Lilla S."/>
            <person name="Espagne C."/>
            <person name="Meinnel T."/>
            <person name="Giglione C."/>
        </authorList>
    </citation>
    <scope>ACETYLATION [LARGE SCALE ANALYSIS] AT ALA-60</scope>
    <scope>CLEAVAGE OF TRANSIT PEPTIDE [LARGE SCALE ANALYSIS] AFTER MET-59</scope>
    <scope>IDENTIFICATION BY MASS SPECTROMETRY [LARGE SCALE ANALYSIS]</scope>
</reference>
<reference key="8">
    <citation type="journal article" date="2015" name="J. Exp. Bot.">
        <title>Disruption of both chloroplastic and cytosolic FBPase genes results in a dwarf phenotype and important starch and metabolite changes in Arabidopsis thaliana.</title>
        <authorList>
            <person name="Rojas-Gonzalez J.A."/>
            <person name="Soto-Suarez M."/>
            <person name="Garcia-Diaz A."/>
            <person name="Romero-Puertas M.C."/>
            <person name="Sandalio L.M."/>
            <person name="Merida A."/>
            <person name="Thormaehlen I."/>
            <person name="Geigenberger P."/>
            <person name="Serrato A.J."/>
            <person name="Sahrawy M."/>
        </authorList>
    </citation>
    <scope>FUNCTION</scope>
    <scope>DISRUPTION PHENOTYPE</scope>
</reference>
<organism>
    <name type="scientific">Arabidopsis thaliana</name>
    <name type="common">Mouse-ear cress</name>
    <dbReference type="NCBI Taxonomy" id="3702"/>
    <lineage>
        <taxon>Eukaryota</taxon>
        <taxon>Viridiplantae</taxon>
        <taxon>Streptophyta</taxon>
        <taxon>Embryophyta</taxon>
        <taxon>Tracheophyta</taxon>
        <taxon>Spermatophyta</taxon>
        <taxon>Magnoliopsida</taxon>
        <taxon>eudicotyledons</taxon>
        <taxon>Gunneridae</taxon>
        <taxon>Pentapetalae</taxon>
        <taxon>rosids</taxon>
        <taxon>malvids</taxon>
        <taxon>Brassicales</taxon>
        <taxon>Brassicaceae</taxon>
        <taxon>Camelineae</taxon>
        <taxon>Arabidopsis</taxon>
    </lineage>
</organism>
<protein>
    <recommendedName>
        <fullName evidence="10">Fructose-1,6-bisphosphatase 1, chloroplastic</fullName>
        <shortName evidence="10">FBPase1</shortName>
        <ecNumber evidence="10">3.1.3.11</ecNumber>
    </recommendedName>
    <alternativeName>
        <fullName evidence="10">D-fructose-1,6-bisphosphate 1-phosphohydrolase</fullName>
    </alternativeName>
    <alternativeName>
        <fullName evidence="8">Protein HIGH CYCLIC ELECTRON FLOW 1</fullName>
    </alternativeName>
</protein>
<sequence>MAATAATTTSSHLLLSSSRHVASSSQPSILSPRSLFSNNGKRAPTGVRNHQYASGVRCMAVAADAAETKTAARKKSGYELQTLTGWLLRQEMKGEIDAELTIVMSSISLACKQIASLVQRAGISNLTGVQGAVNIQGEDQKKLDVISNEVFSNCLRSSGRTGIIASEEEDVPVAVEESYSGNYVVVFDPLDGSSNIDAAVSTGSIFGIYSPNDECIVDDSDDISALGSEEQRCIVNVCQPGNNLLAAGYCMYSSSVIFVLTLGKGVFSFTLDPMYGEFVLTQENIEIPKAGRIYSFNEGNYQMWDDKLKKYIDDLKDPGPTGKPYSARYIGSLVGDFHRTLLYGGIYGYPRDAKSKNGKLRLLYECAPMSFIVEQAGGKGSDGHSRVLDIQPTEIHQRVPLYIGSTEEVEKLEKYLA</sequence>
<name>F16P1_ARATH</name>
<dbReference type="EC" id="3.1.3.11" evidence="10"/>
<dbReference type="EMBL" id="X58148">
    <property type="protein sequence ID" value="CAA41154.1"/>
    <property type="molecule type" value="mRNA"/>
</dbReference>
<dbReference type="EMBL" id="AL132957">
    <property type="protein sequence ID" value="CAB70979.1"/>
    <property type="molecule type" value="Genomic_DNA"/>
</dbReference>
<dbReference type="EMBL" id="CP002686">
    <property type="protein sequence ID" value="AEE79179.1"/>
    <property type="molecule type" value="Genomic_DNA"/>
</dbReference>
<dbReference type="EMBL" id="CP002686">
    <property type="protein sequence ID" value="AEE79180.1"/>
    <property type="molecule type" value="Genomic_DNA"/>
</dbReference>
<dbReference type="EMBL" id="AF428326">
    <property type="protein sequence ID" value="AAL16256.1"/>
    <property type="molecule type" value="mRNA"/>
</dbReference>
<dbReference type="EMBL" id="AY039934">
    <property type="protein sequence ID" value="AAK64038.1"/>
    <property type="molecule type" value="mRNA"/>
</dbReference>
<dbReference type="EMBL" id="AY150450">
    <property type="protein sequence ID" value="AAN12891.1"/>
    <property type="molecule type" value="mRNA"/>
</dbReference>
<dbReference type="EMBL" id="BT000743">
    <property type="protein sequence ID" value="AAN31884.1"/>
    <property type="molecule type" value="mRNA"/>
</dbReference>
<dbReference type="PIR" id="S16582">
    <property type="entry name" value="S16582"/>
</dbReference>
<dbReference type="PIR" id="T47564">
    <property type="entry name" value="T47564"/>
</dbReference>
<dbReference type="RefSeq" id="NP_001190083.1">
    <property type="nucleotide sequence ID" value="NM_001203154.1"/>
</dbReference>
<dbReference type="RefSeq" id="NP_190973.1">
    <property type="nucleotide sequence ID" value="NM_115265.5"/>
</dbReference>
<dbReference type="SMR" id="P25851"/>
<dbReference type="BioGRID" id="9889">
    <property type="interactions" value="3"/>
</dbReference>
<dbReference type="FunCoup" id="P25851">
    <property type="interactions" value="1235"/>
</dbReference>
<dbReference type="IntAct" id="P25851">
    <property type="interactions" value="1"/>
</dbReference>
<dbReference type="STRING" id="3702.P25851"/>
<dbReference type="iPTMnet" id="P25851"/>
<dbReference type="PaxDb" id="3702-AT3G54050.1"/>
<dbReference type="ProteomicsDB" id="222255"/>
<dbReference type="EnsemblPlants" id="AT3G54050.1">
    <property type="protein sequence ID" value="AT3G54050.1"/>
    <property type="gene ID" value="AT3G54050"/>
</dbReference>
<dbReference type="EnsemblPlants" id="AT3G54050.2">
    <property type="protein sequence ID" value="AT3G54050.2"/>
    <property type="gene ID" value="AT3G54050"/>
</dbReference>
<dbReference type="GeneID" id="824572"/>
<dbReference type="Gramene" id="AT3G54050.1">
    <property type="protein sequence ID" value="AT3G54050.1"/>
    <property type="gene ID" value="AT3G54050"/>
</dbReference>
<dbReference type="Gramene" id="AT3G54050.2">
    <property type="protein sequence ID" value="AT3G54050.2"/>
    <property type="gene ID" value="AT3G54050"/>
</dbReference>
<dbReference type="KEGG" id="ath:AT3G54050"/>
<dbReference type="Araport" id="AT3G54050"/>
<dbReference type="TAIR" id="AT3G54050">
    <property type="gene designation" value="HCEF1"/>
</dbReference>
<dbReference type="eggNOG" id="KOG1458">
    <property type="taxonomic scope" value="Eukaryota"/>
</dbReference>
<dbReference type="HOGENOM" id="CLU_039977_2_2_1"/>
<dbReference type="InParanoid" id="P25851"/>
<dbReference type="OMA" id="RCMAVGT"/>
<dbReference type="PhylomeDB" id="P25851"/>
<dbReference type="BioCyc" id="ARA:AT3G54050-MONOMER"/>
<dbReference type="BioCyc" id="MetaCyc:AT3G54050-WS-MONOMER"/>
<dbReference type="UniPathway" id="UPA00116"/>
<dbReference type="CD-CODE" id="4299E36E">
    <property type="entry name" value="Nucleolus"/>
</dbReference>
<dbReference type="PRO" id="PR:P25851"/>
<dbReference type="Proteomes" id="UP000006548">
    <property type="component" value="Chromosome 3"/>
</dbReference>
<dbReference type="ExpressionAtlas" id="P25851">
    <property type="expression patterns" value="baseline and differential"/>
</dbReference>
<dbReference type="GO" id="GO:0048046">
    <property type="term" value="C:apoplast"/>
    <property type="evidence" value="ECO:0007005"/>
    <property type="project" value="TAIR"/>
</dbReference>
<dbReference type="GO" id="GO:0009507">
    <property type="term" value="C:chloroplast"/>
    <property type="evidence" value="ECO:0007005"/>
    <property type="project" value="TAIR"/>
</dbReference>
<dbReference type="GO" id="GO:0009570">
    <property type="term" value="C:chloroplast stroma"/>
    <property type="evidence" value="ECO:0007005"/>
    <property type="project" value="TAIR"/>
</dbReference>
<dbReference type="GO" id="GO:0005829">
    <property type="term" value="C:cytosol"/>
    <property type="evidence" value="ECO:0007005"/>
    <property type="project" value="TAIR"/>
</dbReference>
<dbReference type="GO" id="GO:0010319">
    <property type="term" value="C:stromule"/>
    <property type="evidence" value="ECO:0000314"/>
    <property type="project" value="TAIR"/>
</dbReference>
<dbReference type="GO" id="GO:0042132">
    <property type="term" value="F:fructose 1,6-bisphosphate 1-phosphatase activity"/>
    <property type="evidence" value="ECO:0000315"/>
    <property type="project" value="TAIR"/>
</dbReference>
<dbReference type="GO" id="GO:0046872">
    <property type="term" value="F:metal ion binding"/>
    <property type="evidence" value="ECO:0007669"/>
    <property type="project" value="UniProtKB-KW"/>
</dbReference>
<dbReference type="GO" id="GO:0030388">
    <property type="term" value="P:fructose 1,6-bisphosphate metabolic process"/>
    <property type="evidence" value="ECO:0000315"/>
    <property type="project" value="TAIR"/>
</dbReference>
<dbReference type="GO" id="GO:0015979">
    <property type="term" value="P:photosynthesis"/>
    <property type="evidence" value="ECO:0000315"/>
    <property type="project" value="TAIR"/>
</dbReference>
<dbReference type="GO" id="GO:0009773">
    <property type="term" value="P:photosynthetic electron transport in photosystem I"/>
    <property type="evidence" value="ECO:0000315"/>
    <property type="project" value="TAIR"/>
</dbReference>
<dbReference type="GO" id="GO:0019253">
    <property type="term" value="P:reductive pentose-phosphate cycle"/>
    <property type="evidence" value="ECO:0007669"/>
    <property type="project" value="UniProtKB-UniPathway"/>
</dbReference>
<dbReference type="GO" id="GO:0009409">
    <property type="term" value="P:response to cold"/>
    <property type="evidence" value="ECO:0000270"/>
    <property type="project" value="TAIR"/>
</dbReference>
<dbReference type="GO" id="GO:0005985">
    <property type="term" value="P:sucrose metabolic process"/>
    <property type="evidence" value="ECO:0000315"/>
    <property type="project" value="TAIR"/>
</dbReference>
<dbReference type="CDD" id="cd00354">
    <property type="entry name" value="FBPase"/>
    <property type="match status" value="1"/>
</dbReference>
<dbReference type="FunFam" id="3.40.190.80:FF:000001">
    <property type="entry name" value="Fructose-1,6-bisphosphatase class 1"/>
    <property type="match status" value="1"/>
</dbReference>
<dbReference type="FunFam" id="3.30.540.10:FF:000014">
    <property type="entry name" value="Fructose-1,6-bisphosphatase, chloroplastic"/>
    <property type="match status" value="1"/>
</dbReference>
<dbReference type="Gene3D" id="3.40.190.80">
    <property type="match status" value="1"/>
</dbReference>
<dbReference type="Gene3D" id="3.30.540.10">
    <property type="entry name" value="Fructose-1,6-Bisphosphatase, subunit A, domain 1"/>
    <property type="match status" value="1"/>
</dbReference>
<dbReference type="HAMAP" id="MF_01855">
    <property type="entry name" value="FBPase_class1"/>
    <property type="match status" value="1"/>
</dbReference>
<dbReference type="InterPro" id="IPR044015">
    <property type="entry name" value="FBPase_C_dom"/>
</dbReference>
<dbReference type="InterPro" id="IPR000146">
    <property type="entry name" value="FBPase_class-1"/>
</dbReference>
<dbReference type="InterPro" id="IPR033391">
    <property type="entry name" value="FBPase_N"/>
</dbReference>
<dbReference type="InterPro" id="IPR028343">
    <property type="entry name" value="FBPtase"/>
</dbReference>
<dbReference type="InterPro" id="IPR020548">
    <property type="entry name" value="Fructose_bisphosphatase_AS"/>
</dbReference>
<dbReference type="NCBIfam" id="NF006778">
    <property type="entry name" value="PRK09293.1-1"/>
    <property type="match status" value="1"/>
</dbReference>
<dbReference type="PANTHER" id="PTHR11556">
    <property type="entry name" value="FRUCTOSE-1,6-BISPHOSPHATASE-RELATED"/>
    <property type="match status" value="1"/>
</dbReference>
<dbReference type="PANTHER" id="PTHR11556:SF1">
    <property type="entry name" value="FRUCTOSE-BISPHOSPHATASE"/>
    <property type="match status" value="1"/>
</dbReference>
<dbReference type="Pfam" id="PF00316">
    <property type="entry name" value="FBPase"/>
    <property type="match status" value="1"/>
</dbReference>
<dbReference type="Pfam" id="PF18913">
    <property type="entry name" value="FBPase_C"/>
    <property type="match status" value="1"/>
</dbReference>
<dbReference type="PIRSF" id="PIRSF500210">
    <property type="entry name" value="FBPtase"/>
    <property type="match status" value="1"/>
</dbReference>
<dbReference type="PIRSF" id="PIRSF000904">
    <property type="entry name" value="FBPtase_SBPase"/>
    <property type="match status" value="1"/>
</dbReference>
<dbReference type="PRINTS" id="PR00115">
    <property type="entry name" value="F16BPHPHTASE"/>
</dbReference>
<dbReference type="SUPFAM" id="SSF56655">
    <property type="entry name" value="Carbohydrate phosphatase"/>
    <property type="match status" value="1"/>
</dbReference>
<dbReference type="PROSITE" id="PS00124">
    <property type="entry name" value="FBPASE"/>
    <property type="match status" value="1"/>
</dbReference>
<feature type="transit peptide" description="Chloroplast" evidence="2 12">
    <location>
        <begin position="1"/>
        <end position="59"/>
    </location>
</feature>
<feature type="chain" id="PRO_0000008814" description="Fructose-1,6-bisphosphatase 1, chloroplastic">
    <location>
        <begin position="60"/>
        <end position="417"/>
    </location>
</feature>
<feature type="region of interest" description="Disordered" evidence="3">
    <location>
        <begin position="24"/>
        <end position="48"/>
    </location>
</feature>
<feature type="compositionally biased region" description="Low complexity" evidence="3">
    <location>
        <begin position="24"/>
        <end position="35"/>
    </location>
</feature>
<feature type="binding site" evidence="1">
    <location>
        <position position="138"/>
    </location>
    <ligand>
        <name>Mg(2+)</name>
        <dbReference type="ChEBI" id="CHEBI:18420"/>
        <label>1</label>
    </ligand>
</feature>
<feature type="binding site" evidence="1">
    <location>
        <position position="167"/>
    </location>
    <ligand>
        <name>Mg(2+)</name>
        <dbReference type="ChEBI" id="CHEBI:18420"/>
        <label>1</label>
    </ligand>
</feature>
<feature type="binding site" evidence="1">
    <location>
        <position position="167"/>
    </location>
    <ligand>
        <name>Mg(2+)</name>
        <dbReference type="ChEBI" id="CHEBI:18420"/>
        <label>2</label>
    </ligand>
</feature>
<feature type="binding site" evidence="1">
    <location>
        <position position="188"/>
    </location>
    <ligand>
        <name>Mg(2+)</name>
        <dbReference type="ChEBI" id="CHEBI:18420"/>
        <label>2</label>
    </ligand>
</feature>
<feature type="binding site" evidence="1">
    <location>
        <position position="188"/>
    </location>
    <ligand>
        <name>Mg(2+)</name>
        <dbReference type="ChEBI" id="CHEBI:18420"/>
        <label>3</label>
    </ligand>
</feature>
<feature type="binding site" evidence="1">
    <location>
        <position position="190"/>
    </location>
    <ligand>
        <name>Mg(2+)</name>
        <dbReference type="ChEBI" id="CHEBI:18420"/>
        <label>2</label>
    </ligand>
</feature>
<feature type="binding site" evidence="1">
    <location>
        <begin position="191"/>
        <end position="194"/>
    </location>
    <ligand>
        <name>substrate</name>
    </ligand>
</feature>
<feature type="binding site" evidence="1">
    <location>
        <position position="191"/>
    </location>
    <ligand>
        <name>Mg(2+)</name>
        <dbReference type="ChEBI" id="CHEBI:18420"/>
        <label>3</label>
    </ligand>
</feature>
<feature type="binding site" evidence="1">
    <location>
        <position position="297"/>
    </location>
    <ligand>
        <name>substrate</name>
    </ligand>
</feature>
<feature type="binding site" evidence="1">
    <location>
        <position position="329"/>
    </location>
    <ligand>
        <name>substrate</name>
    </ligand>
</feature>
<feature type="binding site" evidence="1">
    <location>
        <position position="347"/>
    </location>
    <ligand>
        <name>substrate</name>
    </ligand>
</feature>
<feature type="binding site" evidence="1">
    <location>
        <position position="349"/>
    </location>
    <ligand>
        <name>substrate</name>
    </ligand>
</feature>
<feature type="binding site" evidence="1">
    <location>
        <position position="359"/>
    </location>
    <ligand>
        <name>substrate</name>
    </ligand>
</feature>
<feature type="binding site" evidence="1">
    <location>
        <position position="365"/>
    </location>
    <ligand>
        <name>Mg(2+)</name>
        <dbReference type="ChEBI" id="CHEBI:18420"/>
        <label>3</label>
    </ligand>
</feature>
<feature type="modified residue" description="N-acetylalanine" evidence="12">
    <location>
        <position position="60"/>
    </location>
</feature>
<feature type="disulfide bond" description="Redox-active (light-modulated)" evidence="1">
    <location>
        <begin position="233"/>
        <end position="238"/>
    </location>
</feature>
<feature type="mutagenesis site" description="In hcef1; reduced growth rate, dwarf phenotype and delayed flowering." evidence="5">
    <original>R</original>
    <variation>K</variation>
    <location>
        <position position="361"/>
    </location>
</feature>
<feature type="sequence conflict" description="In Ref. 1; CAA41154." evidence="10" ref="1">
    <original>T</original>
    <variation>S</variation>
    <location>
        <position position="4"/>
    </location>
</feature>
<feature type="sequence conflict" description="In Ref. 1; CAA41154." evidence="10" ref="1">
    <original>A</original>
    <variation>S</variation>
    <location>
        <position position="66"/>
    </location>
</feature>
<feature type="sequence conflict" description="In Ref. 1; CAA41154." evidence="10" ref="1">
    <original>V</original>
    <variation>I</variation>
    <location>
        <position position="133"/>
    </location>
</feature>
<accession>P25851</accession>
<accession>Q9M398</accession>
<comment type="function">
    <text evidence="4 5 6 11">Catalyzes the irreversible reaction from fructose-1,6-bisphosphate to fructose-6-phosphate and inorganic phosphate, to regenerate the primary CO(2) acceptor molecule, ribulose-1,5-bisphosphate (Probable). Involved in the regulation of photosynthetic electron flow and sucrose synthesis (PubMed:15448173, PubMed:20081115). Its activity is critical for normal plant development and important for the regulation of a wide range of metabolic processes (PubMed:25743161).</text>
</comment>
<comment type="catalytic activity">
    <reaction evidence="10">
        <text>beta-D-fructose 1,6-bisphosphate + H2O = beta-D-fructose 6-phosphate + phosphate</text>
        <dbReference type="Rhea" id="RHEA:11064"/>
        <dbReference type="ChEBI" id="CHEBI:15377"/>
        <dbReference type="ChEBI" id="CHEBI:32966"/>
        <dbReference type="ChEBI" id="CHEBI:43474"/>
        <dbReference type="ChEBI" id="CHEBI:57634"/>
        <dbReference type="EC" id="3.1.3.11"/>
    </reaction>
</comment>
<comment type="cofactor">
    <cofactor evidence="1">
        <name>Mg(2+)</name>
        <dbReference type="ChEBI" id="CHEBI:18420"/>
    </cofactor>
    <text evidence="1">Binds 3 Mg(2+) ions per subunit.</text>
</comment>
<comment type="pathway">
    <text evidence="10">Carbohydrate biosynthesis; Calvin cycle.</text>
</comment>
<comment type="subunit">
    <text evidence="1">Homotetramer.</text>
</comment>
<comment type="subcellular location">
    <subcellularLocation>
        <location evidence="10">Plastid</location>
        <location evidence="10">Chloroplast stroma</location>
    </subcellularLocation>
</comment>
<comment type="induction">
    <text evidence="1">Light activation through pH changes, Mg(2+) levels and also by light-modulated reduction of essential disulfide groups via the ferredoxin-thioredoxin f system.</text>
</comment>
<comment type="disruption phenotype">
    <text evidence="6">Reduced growth rate, dwarf phenotype and delayed flowering.</text>
</comment>
<comment type="miscellaneous">
    <text evidence="10">In plants there are two FBPase isozymes: one in the cytosol and the other in the chloroplast.</text>
</comment>
<comment type="similarity">
    <text evidence="10">Belongs to the FBPase class 1 family.</text>
</comment>
<keyword id="KW-0007">Acetylation</keyword>
<keyword id="KW-0113">Calvin cycle</keyword>
<keyword id="KW-0119">Carbohydrate metabolism</keyword>
<keyword id="KW-0150">Chloroplast</keyword>
<keyword id="KW-1015">Disulfide bond</keyword>
<keyword id="KW-0378">Hydrolase</keyword>
<keyword id="KW-0460">Magnesium</keyword>
<keyword id="KW-0479">Metal-binding</keyword>
<keyword id="KW-0934">Plastid</keyword>
<keyword id="KW-1185">Reference proteome</keyword>
<keyword id="KW-0809">Transit peptide</keyword>
<proteinExistence type="evidence at protein level"/>
<evidence type="ECO:0000250" key="1"/>
<evidence type="ECO:0000255" key="2"/>
<evidence type="ECO:0000256" key="3">
    <source>
        <dbReference type="SAM" id="MobiDB-lite"/>
    </source>
</evidence>
<evidence type="ECO:0000269" key="4">
    <source>
    </source>
</evidence>
<evidence type="ECO:0000269" key="5">
    <source>
    </source>
</evidence>
<evidence type="ECO:0000269" key="6">
    <source>
    </source>
</evidence>
<evidence type="ECO:0000303" key="7">
    <source>
    </source>
</evidence>
<evidence type="ECO:0000303" key="8">
    <source>
    </source>
</evidence>
<evidence type="ECO:0000303" key="9">
    <source>
    </source>
</evidence>
<evidence type="ECO:0000305" key="10"/>
<evidence type="ECO:0000305" key="11">
    <source>
    </source>
</evidence>
<evidence type="ECO:0007744" key="12">
    <source>
    </source>
</evidence>